<name>FLAB3_TREMA</name>
<protein>
    <recommendedName>
        <fullName>Flagellar filament 30.7 kDa core protein</fullName>
    </recommendedName>
    <alternativeName>
        <fullName>Flagellin subunit protein B3</fullName>
    </alternativeName>
</protein>
<reference key="1">
    <citation type="journal article" date="2000" name="Microbiology">
        <title>A flagellar gene cluster from the oral spirochaete Treponema maltophilum.</title>
        <authorList>
            <person name="Heuner K."/>
            <person name="Grosse K."/>
            <person name="Schade R."/>
            <person name="Goebel U.B."/>
        </authorList>
    </citation>
    <scope>NUCLEOTIDE SEQUENCE [GENOMIC DNA]</scope>
    <source>
        <strain>ATCC 51939 / DSM 27366 / CIP 105146 / OMZ 679 / BR</strain>
    </source>
</reference>
<reference key="2">
    <citation type="journal article" date="1998" name="Infect. Immun.">
        <title>Flagellins, but not endoflagellar sheath proteins, of Treponema pallidum and of pathogen-related oral spirochetes are glycosylated.</title>
        <authorList>
            <person name="Wyss C."/>
        </authorList>
    </citation>
    <scope>GLYCOSYLATION</scope>
</reference>
<accession>Q9KWW9</accession>
<feature type="chain" id="PRO_0000182641" description="Flagellar filament 30.7 kDa core protein">
    <location>
        <begin position="1"/>
        <end position="285"/>
    </location>
</feature>
<evidence type="ECO:0000269" key="1">
    <source>
    </source>
</evidence>
<evidence type="ECO:0000305" key="2"/>
<sequence>MIINHNMSSMYANRMLGINNDQVQGNIEKLSSGQRINRAGDDASGLAVSEKMRMQIRGLNQAQKNIQNGVSFIQATEGYLQETTDILGRIRELSIQSANGIYSDEDRMQIQVEVSQLIDEVDRIASSAQFNGMNMLTGAFAANSVSGRIMQFHIGANVDQNARVYIGTMTAQSLGLVGTQGDAFAKLSIASPESANMAIATLDSALTSVNKQRADLGAYQNRFEMAAKGIGIASENLQAAESIIRDTDMASEIVDYTKNQILTQSSVAMLAQANTQAQNVLPLLS</sequence>
<keyword id="KW-0975">Bacterial flagellum</keyword>
<keyword id="KW-0325">Glycoprotein</keyword>
<keyword id="KW-0574">Periplasm</keyword>
<gene>
    <name type="primary">flaB3</name>
</gene>
<dbReference type="EMBL" id="Y18889">
    <property type="protein sequence ID" value="CAB67250.1"/>
    <property type="molecule type" value="Genomic_DNA"/>
</dbReference>
<dbReference type="SMR" id="Q9KWW9"/>
<dbReference type="GO" id="GO:0055040">
    <property type="term" value="C:periplasmic flagellum"/>
    <property type="evidence" value="ECO:0007669"/>
    <property type="project" value="UniProtKB-SubCell"/>
</dbReference>
<dbReference type="GO" id="GO:0005198">
    <property type="term" value="F:structural molecule activity"/>
    <property type="evidence" value="ECO:0007669"/>
    <property type="project" value="InterPro"/>
</dbReference>
<dbReference type="Gene3D" id="2.170.280.10">
    <property type="entry name" value="f41 fragment of flagellin, middle domain"/>
    <property type="match status" value="1"/>
</dbReference>
<dbReference type="Gene3D" id="1.20.1330.10">
    <property type="entry name" value="f41 fragment of flagellin, N-terminal domain"/>
    <property type="match status" value="2"/>
</dbReference>
<dbReference type="Gene3D" id="6.10.10.10">
    <property type="entry name" value="Flagellar export chaperone, C-terminal domain"/>
    <property type="match status" value="1"/>
</dbReference>
<dbReference type="InterPro" id="IPR001492">
    <property type="entry name" value="Flagellin"/>
</dbReference>
<dbReference type="InterPro" id="IPR046358">
    <property type="entry name" value="Flagellin_C"/>
</dbReference>
<dbReference type="InterPro" id="IPR042187">
    <property type="entry name" value="Flagellin_C_sub2"/>
</dbReference>
<dbReference type="InterPro" id="IPR001029">
    <property type="entry name" value="Flagellin_N"/>
</dbReference>
<dbReference type="PANTHER" id="PTHR42792">
    <property type="entry name" value="FLAGELLIN"/>
    <property type="match status" value="1"/>
</dbReference>
<dbReference type="PANTHER" id="PTHR42792:SF2">
    <property type="entry name" value="FLAGELLIN"/>
    <property type="match status" value="1"/>
</dbReference>
<dbReference type="Pfam" id="PF00700">
    <property type="entry name" value="Flagellin_C"/>
    <property type="match status" value="1"/>
</dbReference>
<dbReference type="Pfam" id="PF00669">
    <property type="entry name" value="Flagellin_N"/>
    <property type="match status" value="1"/>
</dbReference>
<dbReference type="PRINTS" id="PR00207">
    <property type="entry name" value="FLAGELLIN"/>
</dbReference>
<dbReference type="SUPFAM" id="SSF64518">
    <property type="entry name" value="Phase 1 flagellin"/>
    <property type="match status" value="1"/>
</dbReference>
<comment type="function">
    <text>Component of the core of the flagella.</text>
</comment>
<comment type="subunit">
    <text>The core of the flagellum consists of several antigenically related polypeptides.</text>
</comment>
<comment type="subcellular location">
    <subcellularLocation>
        <location>Periplasmic flagellum</location>
    </subcellularLocation>
    <subcellularLocation>
        <location>Periplasm</location>
    </subcellularLocation>
</comment>
<comment type="PTM">
    <text evidence="1">Glycosylated. Glycosylation is not essential for motility.</text>
</comment>
<comment type="similarity">
    <text evidence="2">Belongs to the bacterial flagellin family.</text>
</comment>
<organism>
    <name type="scientific">Treponema maltophilum</name>
    <dbReference type="NCBI Taxonomy" id="51160"/>
    <lineage>
        <taxon>Bacteria</taxon>
        <taxon>Pseudomonadati</taxon>
        <taxon>Spirochaetota</taxon>
        <taxon>Spirochaetia</taxon>
        <taxon>Spirochaetales</taxon>
        <taxon>Treponemataceae</taxon>
        <taxon>Treponema</taxon>
    </lineage>
</organism>
<proteinExistence type="evidence at protein level"/>